<name>Y670_METJA</name>
<reference key="1">
    <citation type="journal article" date="1996" name="Science">
        <title>Complete genome sequence of the methanogenic archaeon, Methanococcus jannaschii.</title>
        <authorList>
            <person name="Bult C.J."/>
            <person name="White O."/>
            <person name="Olsen G.J."/>
            <person name="Zhou L."/>
            <person name="Fleischmann R.D."/>
            <person name="Sutton G.G."/>
            <person name="Blake J.A."/>
            <person name="FitzGerald L.M."/>
            <person name="Clayton R.A."/>
            <person name="Gocayne J.D."/>
            <person name="Kerlavage A.R."/>
            <person name="Dougherty B.A."/>
            <person name="Tomb J.-F."/>
            <person name="Adams M.D."/>
            <person name="Reich C.I."/>
            <person name="Overbeek R."/>
            <person name="Kirkness E.F."/>
            <person name="Weinstock K.G."/>
            <person name="Merrick J.M."/>
            <person name="Glodek A."/>
            <person name="Scott J.L."/>
            <person name="Geoghagen N.S.M."/>
            <person name="Weidman J.F."/>
            <person name="Fuhrmann J.L."/>
            <person name="Nguyen D."/>
            <person name="Utterback T.R."/>
            <person name="Kelley J.M."/>
            <person name="Peterson J.D."/>
            <person name="Sadow P.W."/>
            <person name="Hanna M.C."/>
            <person name="Cotton M.D."/>
            <person name="Roberts K.M."/>
            <person name="Hurst M.A."/>
            <person name="Kaine B.P."/>
            <person name="Borodovsky M."/>
            <person name="Klenk H.-P."/>
            <person name="Fraser C.M."/>
            <person name="Smith H.O."/>
            <person name="Woese C.R."/>
            <person name="Venter J.C."/>
        </authorList>
    </citation>
    <scope>NUCLEOTIDE SEQUENCE [LARGE SCALE GENOMIC DNA]</scope>
    <source>
        <strain>ATCC 43067 / DSM 2661 / JAL-1 / JCM 10045 / NBRC 100440</strain>
    </source>
</reference>
<feature type="chain" id="PRO_0000106983" description="Uncharacterized protein MJ0670">
    <location>
        <begin position="1"/>
        <end position="356"/>
    </location>
</feature>
<sequence>MRVMLPNKKALEIIRKYMKIYNGKNEKDIKERLIKELKEEHVLVETEDGTYTLKAEDEEEMMHSKVGALKEAIYKFAKPSKITDLSNPRVLDLCSGMGYNAIAALHYNKNAEIDMVEICEEVLFLTLFLDIPYKEHEIIKDKVREYFLNKIGIEYKSDYDNINLYVGDARKFIIKSDKKYNVVFHDAFSPKRDPTLYTYDFLKEIYKRMEDNGVLISYSSAIPFRSALVDCGFVISEKESVGRKRGITLAYKNPNFKPNRINEVDERVIALSVIALPYRDETLSLTKDKIIEDREERREKLKEKLIKIGKYLSTKQIKKGNIPEEILKIQKEDLNSSEIIKKMRLKFFKDANIFIL</sequence>
<organism>
    <name type="scientific">Methanocaldococcus jannaschii (strain ATCC 43067 / DSM 2661 / JAL-1 / JCM 10045 / NBRC 100440)</name>
    <name type="common">Methanococcus jannaschii</name>
    <dbReference type="NCBI Taxonomy" id="243232"/>
    <lineage>
        <taxon>Archaea</taxon>
        <taxon>Methanobacteriati</taxon>
        <taxon>Methanobacteriota</taxon>
        <taxon>Methanomada group</taxon>
        <taxon>Methanococci</taxon>
        <taxon>Methanococcales</taxon>
        <taxon>Methanocaldococcaceae</taxon>
        <taxon>Methanocaldococcus</taxon>
    </lineage>
</organism>
<accession>Q58084</accession>
<gene>
    <name type="ordered locus">MJ0670</name>
</gene>
<dbReference type="EMBL" id="L77117">
    <property type="protein sequence ID" value="AAB98664.1"/>
    <property type="molecule type" value="Genomic_DNA"/>
</dbReference>
<dbReference type="PIR" id="F64383">
    <property type="entry name" value="F64383"/>
</dbReference>
<dbReference type="SMR" id="Q58084"/>
<dbReference type="STRING" id="243232.MJ_0670"/>
<dbReference type="PaxDb" id="243232-MJ_0670"/>
<dbReference type="EnsemblBacteria" id="AAB98664">
    <property type="protein sequence ID" value="AAB98664"/>
    <property type="gene ID" value="MJ_0670"/>
</dbReference>
<dbReference type="KEGG" id="mja:MJ_0670"/>
<dbReference type="eggNOG" id="arCOG00120">
    <property type="taxonomic scope" value="Archaea"/>
</dbReference>
<dbReference type="HOGENOM" id="CLU_052777_0_0_2"/>
<dbReference type="InParanoid" id="Q58084"/>
<dbReference type="PhylomeDB" id="Q58084"/>
<dbReference type="Proteomes" id="UP000000805">
    <property type="component" value="Chromosome"/>
</dbReference>
<dbReference type="GO" id="GO:0016645">
    <property type="term" value="F:oxidoreductase activity, acting on the CH-NH group of donors"/>
    <property type="evidence" value="ECO:0007669"/>
    <property type="project" value="InterPro"/>
</dbReference>
<dbReference type="CDD" id="cd02440">
    <property type="entry name" value="AdoMet_MTases"/>
    <property type="match status" value="1"/>
</dbReference>
<dbReference type="Gene3D" id="3.40.50.150">
    <property type="entry name" value="Vaccinia Virus protein VP39"/>
    <property type="match status" value="1"/>
</dbReference>
<dbReference type="InterPro" id="IPR008471">
    <property type="entry name" value="MnmC-like_methylTransf"/>
</dbReference>
<dbReference type="InterPro" id="IPR029063">
    <property type="entry name" value="SAM-dependent_MTases_sf"/>
</dbReference>
<dbReference type="PANTHER" id="PTHR39963:SF1">
    <property type="entry name" value="MNMC-LIKE METHYLTRANSFERASE DOMAIN-CONTAINING PROTEIN"/>
    <property type="match status" value="1"/>
</dbReference>
<dbReference type="PANTHER" id="PTHR39963">
    <property type="entry name" value="SLL0983 PROTEIN"/>
    <property type="match status" value="1"/>
</dbReference>
<dbReference type="Pfam" id="PF05430">
    <property type="entry name" value="Methyltransf_30"/>
    <property type="match status" value="1"/>
</dbReference>
<dbReference type="SUPFAM" id="SSF53335">
    <property type="entry name" value="S-adenosyl-L-methionine-dependent methyltransferases"/>
    <property type="match status" value="1"/>
</dbReference>
<protein>
    <recommendedName>
        <fullName>Uncharacterized protein MJ0670</fullName>
    </recommendedName>
</protein>
<proteinExistence type="predicted"/>
<keyword id="KW-1185">Reference proteome</keyword>